<name>RS17_SHIBS</name>
<reference key="1">
    <citation type="journal article" date="2005" name="Nucleic Acids Res.">
        <title>Genome dynamics and diversity of Shigella species, the etiologic agents of bacillary dysentery.</title>
        <authorList>
            <person name="Yang F."/>
            <person name="Yang J."/>
            <person name="Zhang X."/>
            <person name="Chen L."/>
            <person name="Jiang Y."/>
            <person name="Yan Y."/>
            <person name="Tang X."/>
            <person name="Wang J."/>
            <person name="Xiong Z."/>
            <person name="Dong J."/>
            <person name="Xue Y."/>
            <person name="Zhu Y."/>
            <person name="Xu X."/>
            <person name="Sun L."/>
            <person name="Chen S."/>
            <person name="Nie H."/>
            <person name="Peng J."/>
            <person name="Xu J."/>
            <person name="Wang Y."/>
            <person name="Yuan Z."/>
            <person name="Wen Y."/>
            <person name="Yao Z."/>
            <person name="Shen Y."/>
            <person name="Qiang B."/>
            <person name="Hou Y."/>
            <person name="Yu J."/>
            <person name="Jin Q."/>
        </authorList>
    </citation>
    <scope>NUCLEOTIDE SEQUENCE [LARGE SCALE GENOMIC DNA]</scope>
    <source>
        <strain>Sb227</strain>
    </source>
</reference>
<feature type="chain" id="PRO_0000233563" description="Small ribosomal subunit protein uS17">
    <location>
        <begin position="1"/>
        <end position="84"/>
    </location>
</feature>
<keyword id="KW-0687">Ribonucleoprotein</keyword>
<keyword id="KW-0689">Ribosomal protein</keyword>
<keyword id="KW-0694">RNA-binding</keyword>
<keyword id="KW-0699">rRNA-binding</keyword>
<proteinExistence type="inferred from homology"/>
<gene>
    <name evidence="1" type="primary">rpsQ</name>
    <name type="ordered locus">SBO_3305</name>
</gene>
<protein>
    <recommendedName>
        <fullName evidence="1">Small ribosomal subunit protein uS17</fullName>
    </recommendedName>
    <alternativeName>
        <fullName evidence="2">30S ribosomal protein S17</fullName>
    </alternativeName>
</protein>
<evidence type="ECO:0000255" key="1">
    <source>
        <dbReference type="HAMAP-Rule" id="MF_01345"/>
    </source>
</evidence>
<evidence type="ECO:0000305" key="2"/>
<comment type="function">
    <text evidence="1">One of the primary rRNA binding proteins, it binds specifically to the 5'-end of 16S ribosomal RNA.</text>
</comment>
<comment type="subunit">
    <text evidence="1">Part of the 30S ribosomal subunit.</text>
</comment>
<comment type="similarity">
    <text evidence="1">Belongs to the universal ribosomal protein uS17 family.</text>
</comment>
<sequence length="84" mass="9704">MTDKIRTLQGRVVSDKMEKSIVVAIERFVKHPIYGKFIKRTTKLHVHDENNECGIGDVVEIRECRPLSKTKSWTLVRVVEKAVL</sequence>
<accession>Q31VW5</accession>
<organism>
    <name type="scientific">Shigella boydii serotype 4 (strain Sb227)</name>
    <dbReference type="NCBI Taxonomy" id="300268"/>
    <lineage>
        <taxon>Bacteria</taxon>
        <taxon>Pseudomonadati</taxon>
        <taxon>Pseudomonadota</taxon>
        <taxon>Gammaproteobacteria</taxon>
        <taxon>Enterobacterales</taxon>
        <taxon>Enterobacteriaceae</taxon>
        <taxon>Shigella</taxon>
    </lineage>
</organism>
<dbReference type="EMBL" id="CP000036">
    <property type="protein sequence ID" value="ABB67793.1"/>
    <property type="molecule type" value="Genomic_DNA"/>
</dbReference>
<dbReference type="RefSeq" id="WP_000130100.1">
    <property type="nucleotide sequence ID" value="NC_007613.1"/>
</dbReference>
<dbReference type="SMR" id="Q31VW5"/>
<dbReference type="GeneID" id="93778676"/>
<dbReference type="KEGG" id="sbo:SBO_3305"/>
<dbReference type="HOGENOM" id="CLU_073626_1_1_6"/>
<dbReference type="Proteomes" id="UP000007067">
    <property type="component" value="Chromosome"/>
</dbReference>
<dbReference type="GO" id="GO:0022627">
    <property type="term" value="C:cytosolic small ribosomal subunit"/>
    <property type="evidence" value="ECO:0007669"/>
    <property type="project" value="TreeGrafter"/>
</dbReference>
<dbReference type="GO" id="GO:0019843">
    <property type="term" value="F:rRNA binding"/>
    <property type="evidence" value="ECO:0007669"/>
    <property type="project" value="UniProtKB-UniRule"/>
</dbReference>
<dbReference type="GO" id="GO:0003735">
    <property type="term" value="F:structural constituent of ribosome"/>
    <property type="evidence" value="ECO:0007669"/>
    <property type="project" value="InterPro"/>
</dbReference>
<dbReference type="GO" id="GO:0006412">
    <property type="term" value="P:translation"/>
    <property type="evidence" value="ECO:0007669"/>
    <property type="project" value="UniProtKB-UniRule"/>
</dbReference>
<dbReference type="CDD" id="cd00364">
    <property type="entry name" value="Ribosomal_uS17"/>
    <property type="match status" value="1"/>
</dbReference>
<dbReference type="FunFam" id="2.40.50.140:FF:000014">
    <property type="entry name" value="30S ribosomal protein S17"/>
    <property type="match status" value="1"/>
</dbReference>
<dbReference type="Gene3D" id="2.40.50.140">
    <property type="entry name" value="Nucleic acid-binding proteins"/>
    <property type="match status" value="1"/>
</dbReference>
<dbReference type="HAMAP" id="MF_01345_B">
    <property type="entry name" value="Ribosomal_uS17_B"/>
    <property type="match status" value="1"/>
</dbReference>
<dbReference type="InterPro" id="IPR012340">
    <property type="entry name" value="NA-bd_OB-fold"/>
</dbReference>
<dbReference type="InterPro" id="IPR000266">
    <property type="entry name" value="Ribosomal_uS17"/>
</dbReference>
<dbReference type="InterPro" id="IPR019984">
    <property type="entry name" value="Ribosomal_uS17_bact/chlr"/>
</dbReference>
<dbReference type="InterPro" id="IPR019979">
    <property type="entry name" value="Ribosomal_uS17_CS"/>
</dbReference>
<dbReference type="NCBIfam" id="NF004123">
    <property type="entry name" value="PRK05610.1"/>
    <property type="match status" value="1"/>
</dbReference>
<dbReference type="NCBIfam" id="TIGR03635">
    <property type="entry name" value="uS17_bact"/>
    <property type="match status" value="1"/>
</dbReference>
<dbReference type="PANTHER" id="PTHR10744">
    <property type="entry name" value="40S RIBOSOMAL PROTEIN S11 FAMILY MEMBER"/>
    <property type="match status" value="1"/>
</dbReference>
<dbReference type="PANTHER" id="PTHR10744:SF1">
    <property type="entry name" value="SMALL RIBOSOMAL SUBUNIT PROTEIN US17M"/>
    <property type="match status" value="1"/>
</dbReference>
<dbReference type="Pfam" id="PF00366">
    <property type="entry name" value="Ribosomal_S17"/>
    <property type="match status" value="1"/>
</dbReference>
<dbReference type="PRINTS" id="PR00973">
    <property type="entry name" value="RIBOSOMALS17"/>
</dbReference>
<dbReference type="SUPFAM" id="SSF50249">
    <property type="entry name" value="Nucleic acid-binding proteins"/>
    <property type="match status" value="1"/>
</dbReference>
<dbReference type="PROSITE" id="PS00056">
    <property type="entry name" value="RIBOSOMAL_S17"/>
    <property type="match status" value="1"/>
</dbReference>